<reference key="1">
    <citation type="submission" date="2001-07" db="EMBL/GenBank/DDBJ databases">
        <title>The catalase-peroxidase of Mycobacterium smegmatis.</title>
        <authorList>
            <person name="Honore N."/>
        </authorList>
    </citation>
    <scope>NUCLEOTIDE SEQUENCE [GENOMIC DNA]</scope>
</reference>
<reference key="2">
    <citation type="submission" date="2006-10" db="EMBL/GenBank/DDBJ databases">
        <authorList>
            <person name="Fleischmann R.D."/>
            <person name="Dodson R.J."/>
            <person name="Haft D.H."/>
            <person name="Merkel J.S."/>
            <person name="Nelson W.C."/>
            <person name="Fraser C.M."/>
        </authorList>
    </citation>
    <scope>NUCLEOTIDE SEQUENCE [LARGE SCALE GENOMIC DNA]</scope>
    <source>
        <strain>ATCC 700084 / mc(2)155</strain>
    </source>
</reference>
<reference key="3">
    <citation type="journal article" date="2007" name="Genome Biol.">
        <title>Interrupted coding sequences in Mycobacterium smegmatis: authentic mutations or sequencing errors?</title>
        <authorList>
            <person name="Deshayes C."/>
            <person name="Perrodou E."/>
            <person name="Gallien S."/>
            <person name="Euphrasie D."/>
            <person name="Schaeffer C."/>
            <person name="Van-Dorsselaer A."/>
            <person name="Poch O."/>
            <person name="Lecompte O."/>
            <person name="Reyrat J.-M."/>
        </authorList>
    </citation>
    <scope>NUCLEOTIDE SEQUENCE [LARGE SCALE GENOMIC DNA]</scope>
    <source>
        <strain>ATCC 700084 / mc(2)155</strain>
    </source>
</reference>
<reference key="4">
    <citation type="journal article" date="2009" name="Genome Res.">
        <title>Ortho-proteogenomics: multiple proteomes investigation through orthology and a new MS-based protocol.</title>
        <authorList>
            <person name="Gallien S."/>
            <person name="Perrodou E."/>
            <person name="Carapito C."/>
            <person name="Deshayes C."/>
            <person name="Reyrat J.-M."/>
            <person name="Van Dorsselaer A."/>
            <person name="Poch O."/>
            <person name="Schaeffer C."/>
            <person name="Lecompte O."/>
        </authorList>
    </citation>
    <scope>NUCLEOTIDE SEQUENCE [LARGE SCALE GENOMIC DNA]</scope>
    <scope>IDENTIFICATION BY MASS SPECTROMETRY [LARGE SCALE ANALYSIS]</scope>
    <scope>CLEAVAGE OF INITIATOR METHIONINE</scope>
    <source>
        <strain>ATCC 700084 / mc(2)155</strain>
    </source>
</reference>
<reference key="5">
    <citation type="journal article" date="1995" name="J. Biol. Chem.">
        <title>Purification and characterization of the Mycobacterium smegmatis catalase-peroxidase involved in isoniazid activation.</title>
        <authorList>
            <person name="Marcinkeviciene J.A."/>
            <person name="Magliozzo R.S."/>
            <person name="Blanchard J.S."/>
        </authorList>
    </citation>
    <scope>PROTEIN SEQUENCE OF 2-20</scope>
    <scope>BIOPHYSICOCHEMICAL PROPERTIES</scope>
    <scope>HEME-BINDING</scope>
    <scope>SUBUNIT</scope>
    <scope>MASS SPECTROMETRY</scope>
    <scope>DISRUPTION PHENOTYPE</scope>
</reference>
<sequence length="748" mass="81998">MSSDTSDSRPPNPDTKTASTSESENPAIPSPKPKSGAPLRNQDWWPNQIDVSRLHPHPPQGNPLGEDFDYAEEFAKLDVNALKADLTALMTQSQDWWPADYGHYGGLFIRMSWHSAGTYRIHDGRGGGGQGAQRFAPINSWPDNVSLDKARRLLWPIKQKYGNKISWADLLVFTGNVALESMGFKTFGFGFGREDIWEPEEILFGEEDEWLGTDKRYGGGEQRQLAEPYGATTMGLIYVNPEGPEGQPDPLAAAHDIRETFGRMAMNDEETAALIVGGHTFGKTHGAGDASLVGPEPEAAPIEQQGLGWKSSYGTGKGPDTITSGLEVVWTNTPTKWDNSFLEILYGYEWELTKSPAGAWQFTAKDGAGAGTIPDPFGGPGRNPTMLVTDISMRVDPIYGKITRRWLDHPEELSEAFAKAWYKLLHRDMGPISRYLGPWVAEPQLWQDPVPAVDHPLVDDQDIAALKSTVLDSGLSTGQLIKTAWASAASYRNTDKRGGANGARVRLEPQKNWDVNEPAELATVLPVLERIQQDFNASASGGKKVSLADLIVLAGSAAIEKAAKDGGYNVTVPFAPGRTDASQENTDVESFAVLEPRADGFRNYVRPGEKVQLEKMLLERAYFLGVTAPQLTALVGGLRALDVNHGGTKHGVFTDRPGALTNDFFVNLLDMGTEWKTSETTENVYEGVDRKTGQLKWTATANDLVFGSHSVLRAVAEVYAQSDNGERFVNDFVKAWVKVMNNDRFDLK</sequence>
<dbReference type="EC" id="1.11.1.21" evidence="1"/>
<dbReference type="EMBL" id="AJ311851">
    <property type="protein sequence ID" value="CAC44462.1"/>
    <property type="molecule type" value="Genomic_DNA"/>
</dbReference>
<dbReference type="EMBL" id="CP000480">
    <property type="protein sequence ID" value="ABK73887.1"/>
    <property type="molecule type" value="Genomic_DNA"/>
</dbReference>
<dbReference type="EMBL" id="CP001663">
    <property type="protein sequence ID" value="AFP39843.1"/>
    <property type="molecule type" value="Genomic_DNA"/>
</dbReference>
<dbReference type="RefSeq" id="YP_887765.1">
    <property type="nucleotide sequence ID" value="NC_008596.1"/>
</dbReference>
<dbReference type="SMR" id="A0QXX7"/>
<dbReference type="STRING" id="246196.MSMEG_3461"/>
<dbReference type="PeroxiBase" id="3570">
    <property type="entry name" value="MsmCP02_mc2155"/>
</dbReference>
<dbReference type="PaxDb" id="246196-MSMEI_3380"/>
<dbReference type="KEGG" id="msb:LJ00_17220"/>
<dbReference type="KEGG" id="msg:MSMEI_3380"/>
<dbReference type="KEGG" id="msm:MSMEG_3461"/>
<dbReference type="PATRIC" id="fig|246196.19.peg.3418"/>
<dbReference type="eggNOG" id="COG0376">
    <property type="taxonomic scope" value="Bacteria"/>
</dbReference>
<dbReference type="OrthoDB" id="9759743at2"/>
<dbReference type="SABIO-RK" id="A0QXX7"/>
<dbReference type="Proteomes" id="UP000000757">
    <property type="component" value="Chromosome"/>
</dbReference>
<dbReference type="Proteomes" id="UP000006158">
    <property type="component" value="Chromosome"/>
</dbReference>
<dbReference type="GO" id="GO:0005829">
    <property type="term" value="C:cytosol"/>
    <property type="evidence" value="ECO:0007669"/>
    <property type="project" value="TreeGrafter"/>
</dbReference>
<dbReference type="GO" id="GO:0004096">
    <property type="term" value="F:catalase activity"/>
    <property type="evidence" value="ECO:0007669"/>
    <property type="project" value="UniProtKB-UniRule"/>
</dbReference>
<dbReference type="GO" id="GO:0020037">
    <property type="term" value="F:heme binding"/>
    <property type="evidence" value="ECO:0007669"/>
    <property type="project" value="InterPro"/>
</dbReference>
<dbReference type="GO" id="GO:0046872">
    <property type="term" value="F:metal ion binding"/>
    <property type="evidence" value="ECO:0007669"/>
    <property type="project" value="UniProtKB-KW"/>
</dbReference>
<dbReference type="GO" id="GO:0070301">
    <property type="term" value="P:cellular response to hydrogen peroxide"/>
    <property type="evidence" value="ECO:0007669"/>
    <property type="project" value="TreeGrafter"/>
</dbReference>
<dbReference type="GO" id="GO:0042744">
    <property type="term" value="P:hydrogen peroxide catabolic process"/>
    <property type="evidence" value="ECO:0007669"/>
    <property type="project" value="UniProtKB-KW"/>
</dbReference>
<dbReference type="CDD" id="cd00649">
    <property type="entry name" value="catalase_peroxidase_1"/>
    <property type="match status" value="1"/>
</dbReference>
<dbReference type="CDD" id="cd08200">
    <property type="entry name" value="catalase_peroxidase_2"/>
    <property type="match status" value="1"/>
</dbReference>
<dbReference type="FunFam" id="1.10.420.10:FF:000002">
    <property type="entry name" value="Catalase-peroxidase"/>
    <property type="match status" value="1"/>
</dbReference>
<dbReference type="FunFam" id="1.10.420.10:FF:000004">
    <property type="entry name" value="Catalase-peroxidase"/>
    <property type="match status" value="1"/>
</dbReference>
<dbReference type="FunFam" id="1.10.520.10:FF:000002">
    <property type="entry name" value="Catalase-peroxidase"/>
    <property type="match status" value="1"/>
</dbReference>
<dbReference type="Gene3D" id="1.10.520.10">
    <property type="match status" value="2"/>
</dbReference>
<dbReference type="Gene3D" id="1.10.420.10">
    <property type="entry name" value="Peroxidase, domain 2"/>
    <property type="match status" value="2"/>
</dbReference>
<dbReference type="HAMAP" id="MF_01961">
    <property type="entry name" value="Catal_peroxid"/>
    <property type="match status" value="1"/>
</dbReference>
<dbReference type="InterPro" id="IPR000763">
    <property type="entry name" value="Catalase_peroxidase"/>
</dbReference>
<dbReference type="InterPro" id="IPR002016">
    <property type="entry name" value="Haem_peroxidase"/>
</dbReference>
<dbReference type="InterPro" id="IPR010255">
    <property type="entry name" value="Haem_peroxidase_sf"/>
</dbReference>
<dbReference type="InterPro" id="IPR019794">
    <property type="entry name" value="Peroxidases_AS"/>
</dbReference>
<dbReference type="InterPro" id="IPR019793">
    <property type="entry name" value="Peroxidases_heam-ligand_BS"/>
</dbReference>
<dbReference type="NCBIfam" id="TIGR00198">
    <property type="entry name" value="cat_per_HPI"/>
    <property type="match status" value="1"/>
</dbReference>
<dbReference type="NCBIfam" id="NF011635">
    <property type="entry name" value="PRK15061.1"/>
    <property type="match status" value="1"/>
</dbReference>
<dbReference type="PANTHER" id="PTHR30555:SF0">
    <property type="entry name" value="CATALASE-PEROXIDASE"/>
    <property type="match status" value="1"/>
</dbReference>
<dbReference type="PANTHER" id="PTHR30555">
    <property type="entry name" value="HYDROPEROXIDASE I, BIFUNCTIONAL CATALASE-PEROXIDASE"/>
    <property type="match status" value="1"/>
</dbReference>
<dbReference type="Pfam" id="PF00141">
    <property type="entry name" value="peroxidase"/>
    <property type="match status" value="2"/>
</dbReference>
<dbReference type="PRINTS" id="PR00460">
    <property type="entry name" value="BPEROXIDASE"/>
</dbReference>
<dbReference type="PRINTS" id="PR00458">
    <property type="entry name" value="PEROXIDASE"/>
</dbReference>
<dbReference type="SUPFAM" id="SSF48113">
    <property type="entry name" value="Heme-dependent peroxidases"/>
    <property type="match status" value="2"/>
</dbReference>
<dbReference type="PROSITE" id="PS00435">
    <property type="entry name" value="PEROXIDASE_1"/>
    <property type="match status" value="1"/>
</dbReference>
<dbReference type="PROSITE" id="PS00436">
    <property type="entry name" value="PEROXIDASE_2"/>
    <property type="match status" value="1"/>
</dbReference>
<dbReference type="PROSITE" id="PS50873">
    <property type="entry name" value="PEROXIDASE_4"/>
    <property type="match status" value="1"/>
</dbReference>
<accession>A0QXX7</accession>
<accession>I7FMA5</accession>
<accession>Q93JZ3</accession>
<accession>Q9R4J9</accession>
<proteinExistence type="evidence at protein level"/>
<evidence type="ECO:0000255" key="1">
    <source>
        <dbReference type="HAMAP-Rule" id="MF_01961"/>
    </source>
</evidence>
<evidence type="ECO:0000256" key="2">
    <source>
        <dbReference type="SAM" id="MobiDB-lite"/>
    </source>
</evidence>
<evidence type="ECO:0000269" key="3">
    <source>
    </source>
</evidence>
<evidence type="ECO:0000269" key="4">
    <source>
    </source>
</evidence>
<protein>
    <recommendedName>
        <fullName evidence="1">Catalase-peroxidase 2</fullName>
        <shortName evidence="1">CP 2</shortName>
        <ecNumber evidence="1">1.11.1.21</ecNumber>
    </recommendedName>
    <alternativeName>
        <fullName evidence="1">Peroxidase/catalase 2</fullName>
    </alternativeName>
</protein>
<feature type="initiator methionine" description="Removed" evidence="3 4">
    <location>
        <position position="1"/>
    </location>
</feature>
<feature type="chain" id="PRO_0000345094" description="Catalase-peroxidase 2">
    <location>
        <begin position="2"/>
        <end position="748"/>
    </location>
</feature>
<feature type="region of interest" description="Disordered" evidence="2">
    <location>
        <begin position="1"/>
        <end position="43"/>
    </location>
</feature>
<feature type="compositionally biased region" description="Polar residues" evidence="2">
    <location>
        <begin position="1"/>
        <end position="24"/>
    </location>
</feature>
<feature type="active site" description="Proton acceptor" evidence="1">
    <location>
        <position position="114"/>
    </location>
</feature>
<feature type="binding site" description="axial binding residue" evidence="1">
    <location>
        <position position="279"/>
    </location>
    <ligand>
        <name>heme b</name>
        <dbReference type="ChEBI" id="CHEBI:60344"/>
    </ligand>
    <ligandPart>
        <name>Fe</name>
        <dbReference type="ChEBI" id="CHEBI:18248"/>
    </ligandPart>
</feature>
<feature type="site" description="Transition state stabilizer" evidence="1">
    <location>
        <position position="110"/>
    </location>
</feature>
<feature type="cross-link" description="Tryptophyl-tyrosyl-methioninium (Trp-Tyr) (with M-264)" evidence="1">
    <location>
        <begin position="113"/>
        <end position="238"/>
    </location>
</feature>
<feature type="cross-link" description="Tryptophyl-tyrosyl-methioninium (Tyr-Met) (with W-113)" evidence="1">
    <location>
        <begin position="238"/>
        <end position="264"/>
    </location>
</feature>
<comment type="function">
    <text>Bifunctional enzyme with both catalase and broad-spectrum peroxidase activity. May play a role in the intracellular survival of mycobacteria.</text>
</comment>
<comment type="catalytic activity">
    <reaction evidence="1">
        <text>H2O2 + AH2 = A + 2 H2O</text>
        <dbReference type="Rhea" id="RHEA:30275"/>
        <dbReference type="ChEBI" id="CHEBI:13193"/>
        <dbReference type="ChEBI" id="CHEBI:15377"/>
        <dbReference type="ChEBI" id="CHEBI:16240"/>
        <dbReference type="ChEBI" id="CHEBI:17499"/>
        <dbReference type="EC" id="1.11.1.21"/>
    </reaction>
</comment>
<comment type="catalytic activity">
    <reaction evidence="1">
        <text>2 H2O2 = O2 + 2 H2O</text>
        <dbReference type="Rhea" id="RHEA:20309"/>
        <dbReference type="ChEBI" id="CHEBI:15377"/>
        <dbReference type="ChEBI" id="CHEBI:15379"/>
        <dbReference type="ChEBI" id="CHEBI:16240"/>
        <dbReference type="EC" id="1.11.1.21"/>
    </reaction>
</comment>
<comment type="cofactor">
    <cofactor>
        <name>heme b</name>
        <dbReference type="ChEBI" id="CHEBI:60344"/>
    </cofactor>
    <text>Binds 2 heme B (iron-protoporphyrin IX) groups per tetramer.</text>
</comment>
<comment type="biophysicochemical properties">
    <kinetics>
        <KM evidence="4">1.4 mM for H(2)O(2) for the catalase reaction</KM>
        <KM evidence="4">0.19 mM for o-dianisidine for the peroxidase reaction</KM>
        <KM evidence="4">0.17 mM for NADPH for the peroxidase reaction</KM>
        <KM evidence="4">0.23 mM for NADH for the peroxidase reaction</KM>
        <KM evidence="4">0.31 mM for pyrogallol for the peroxidase reaction</KM>
        <KM evidence="4">0.11 mM for 2,2'-azino-bis-(3-ethylbenzthiazoline-6-sulfonic acid) for the peroxidase reaction</KM>
    </kinetics>
</comment>
<comment type="subunit">
    <text evidence="4">Homotetramer.</text>
</comment>
<comment type="PTM">
    <text evidence="1">Formation of the three residue Trp-Tyr-Met cross-link is important for the catalase, but not the peroxidase activity of the enzyme.</text>
</comment>
<comment type="mass spectrometry" mass="81889.0" method="Electrospray" evidence="4"/>
<comment type="disruption phenotype">
    <text evidence="4">Defects cause isoniazid (INH) resistance.</text>
</comment>
<comment type="similarity">
    <text evidence="1">Belongs to the peroxidase family. Peroxidase/catalase subfamily.</text>
</comment>
<keyword id="KW-0903">Direct protein sequencing</keyword>
<keyword id="KW-0349">Heme</keyword>
<keyword id="KW-0376">Hydrogen peroxide</keyword>
<keyword id="KW-0408">Iron</keyword>
<keyword id="KW-0479">Metal-binding</keyword>
<keyword id="KW-0560">Oxidoreductase</keyword>
<keyword id="KW-0575">Peroxidase</keyword>
<keyword id="KW-1185">Reference proteome</keyword>
<name>KATG2_MYCS2</name>
<gene>
    <name evidence="1" type="primary">katG2</name>
    <name type="synonym">katH</name>
    <name type="ordered locus">MSMEG_3461</name>
    <name type="ordered locus">MSMEI_3380</name>
</gene>
<organism>
    <name type="scientific">Mycolicibacterium smegmatis (strain ATCC 700084 / mc(2)155)</name>
    <name type="common">Mycobacterium smegmatis</name>
    <dbReference type="NCBI Taxonomy" id="246196"/>
    <lineage>
        <taxon>Bacteria</taxon>
        <taxon>Bacillati</taxon>
        <taxon>Actinomycetota</taxon>
        <taxon>Actinomycetes</taxon>
        <taxon>Mycobacteriales</taxon>
        <taxon>Mycobacteriaceae</taxon>
        <taxon>Mycolicibacterium</taxon>
    </lineage>
</organism>